<evidence type="ECO:0000255" key="1">
    <source>
        <dbReference type="HAMAP-Rule" id="MF_01390"/>
    </source>
</evidence>
<gene>
    <name evidence="1" type="primary">matK</name>
</gene>
<sequence length="504" mass="60424">MEKFQGYLEFDGARQQSFLYPLFFREYIYVLAYDHGLNRLNRNRSIFLENADYDKKYSSLIVKRSILRMYEQNRLIIPTKDLNQNPFFGHTNIFYYQIISVLFAVIVEIPFSLRLGSYFEGKKFKKSYNLQSIHSIFPFLEDKLSHFNYVLDVLIPYPIHLEILVQILRYWVKDASSLHFFRFCLYEYCNWKNFDIKKKCILNPRFFLFLYNSHVCEYESIFFFLRKRSSHLRSTSYEVLFERILFYGKVQHFLKVFVNNFPAIPGLLTDPFLHYVRYHGKCILATKDTPLLMNKWKFFFVYLWQCYFSVWFQSQKVNINQLSKDNLEFLGYLSSLRLNPLVVRSQMLENSFIIDNVRIKLDSKIPISSIILSLAKDKFCNVLGHPISKATWTDSSDSDILNRFVRICRNISHYYSGSSKKKNLYRIKYILRLCCVKTLARKHKSTVRAFLKRLGSGLLEEFLTGEDQVLSLIFPRSYYASKRLYRVRIWYLDILYLNDLVNHE</sequence>
<proteinExistence type="inferred from homology"/>
<accession>Q9GF45</accession>
<organism>
    <name type="scientific">Pseudoturritis turrita</name>
    <name type="common">Tower rock-cress</name>
    <name type="synonym">Arabis turrita</name>
    <dbReference type="NCBI Taxonomy" id="81982"/>
    <lineage>
        <taxon>Eukaryota</taxon>
        <taxon>Viridiplantae</taxon>
        <taxon>Streptophyta</taxon>
        <taxon>Embryophyta</taxon>
        <taxon>Tracheophyta</taxon>
        <taxon>Spermatophyta</taxon>
        <taxon>Magnoliopsida</taxon>
        <taxon>eudicotyledons</taxon>
        <taxon>Gunneridae</taxon>
        <taxon>Pentapetalae</taxon>
        <taxon>rosids</taxon>
        <taxon>malvids</taxon>
        <taxon>Brassicales</taxon>
        <taxon>Brassicaceae</taxon>
        <taxon>Stevenieae</taxon>
        <taxon>Pseudoturritis</taxon>
    </lineage>
</organism>
<comment type="function">
    <text evidence="1">Usually encoded in the trnK tRNA gene intron. Probably assists in splicing its own and other chloroplast group II introns.</text>
</comment>
<comment type="subcellular location">
    <subcellularLocation>
        <location>Plastid</location>
        <location>Chloroplast</location>
    </subcellularLocation>
</comment>
<comment type="similarity">
    <text evidence="1">Belongs to the intron maturase 2 family. MatK subfamily.</text>
</comment>
<geneLocation type="chloroplast"/>
<feature type="chain" id="PRO_0000143251" description="Maturase K">
    <location>
        <begin position="1"/>
        <end position="504"/>
    </location>
</feature>
<name>MATK_PSEUW</name>
<keyword id="KW-0150">Chloroplast</keyword>
<keyword id="KW-0507">mRNA processing</keyword>
<keyword id="KW-0934">Plastid</keyword>
<keyword id="KW-0694">RNA-binding</keyword>
<keyword id="KW-0819">tRNA processing</keyword>
<protein>
    <recommendedName>
        <fullName evidence="1">Maturase K</fullName>
    </recommendedName>
    <alternativeName>
        <fullName evidence="1">Intron maturase</fullName>
    </alternativeName>
</protein>
<dbReference type="EMBL" id="AF144347">
    <property type="protein sequence ID" value="AAG43316.1"/>
    <property type="molecule type" value="Genomic_DNA"/>
</dbReference>
<dbReference type="GO" id="GO:0009507">
    <property type="term" value="C:chloroplast"/>
    <property type="evidence" value="ECO:0007669"/>
    <property type="project" value="UniProtKB-SubCell"/>
</dbReference>
<dbReference type="GO" id="GO:0003723">
    <property type="term" value="F:RNA binding"/>
    <property type="evidence" value="ECO:0007669"/>
    <property type="project" value="UniProtKB-KW"/>
</dbReference>
<dbReference type="GO" id="GO:0006397">
    <property type="term" value="P:mRNA processing"/>
    <property type="evidence" value="ECO:0007669"/>
    <property type="project" value="UniProtKB-KW"/>
</dbReference>
<dbReference type="GO" id="GO:0008380">
    <property type="term" value="P:RNA splicing"/>
    <property type="evidence" value="ECO:0007669"/>
    <property type="project" value="UniProtKB-UniRule"/>
</dbReference>
<dbReference type="GO" id="GO:0008033">
    <property type="term" value="P:tRNA processing"/>
    <property type="evidence" value="ECO:0007669"/>
    <property type="project" value="UniProtKB-KW"/>
</dbReference>
<dbReference type="HAMAP" id="MF_01390">
    <property type="entry name" value="MatK"/>
    <property type="match status" value="1"/>
</dbReference>
<dbReference type="InterPro" id="IPR024937">
    <property type="entry name" value="Domain_X"/>
</dbReference>
<dbReference type="InterPro" id="IPR002866">
    <property type="entry name" value="Maturase_MatK"/>
</dbReference>
<dbReference type="InterPro" id="IPR024942">
    <property type="entry name" value="Maturase_MatK_N"/>
</dbReference>
<dbReference type="PANTHER" id="PTHR34811">
    <property type="entry name" value="MATURASE K"/>
    <property type="match status" value="1"/>
</dbReference>
<dbReference type="PANTHER" id="PTHR34811:SF1">
    <property type="entry name" value="MATURASE K"/>
    <property type="match status" value="1"/>
</dbReference>
<dbReference type="Pfam" id="PF01348">
    <property type="entry name" value="Intron_maturas2"/>
    <property type="match status" value="1"/>
</dbReference>
<dbReference type="Pfam" id="PF01824">
    <property type="entry name" value="MatK_N"/>
    <property type="match status" value="1"/>
</dbReference>
<reference key="1">
    <citation type="submission" date="1999-04" db="EMBL/GenBank/DDBJ databases">
        <title>Evolutionary analysis of plastidic maturase K and nuclear chalcone synthase and their utility for phylogenetic reconstructions within the Brassicaceae.</title>
        <authorList>
            <person name="Koch M."/>
            <person name="Mitchell-Olds T."/>
        </authorList>
    </citation>
    <scope>NUCLEOTIDE SEQUENCE [GENOMIC DNA]</scope>
</reference>